<keyword id="KW-0210">Decarboxylase</keyword>
<keyword id="KW-0456">Lyase</keyword>
<keyword id="KW-0665">Pyrimidine biosynthesis</keyword>
<organism>
    <name type="scientific">Bacillus cereus (strain G9842)</name>
    <dbReference type="NCBI Taxonomy" id="405531"/>
    <lineage>
        <taxon>Bacteria</taxon>
        <taxon>Bacillati</taxon>
        <taxon>Bacillota</taxon>
        <taxon>Bacilli</taxon>
        <taxon>Bacillales</taxon>
        <taxon>Bacillaceae</taxon>
        <taxon>Bacillus</taxon>
        <taxon>Bacillus cereus group</taxon>
    </lineage>
</organism>
<feature type="chain" id="PRO_1000138512" description="Orotidine 5'-phosphate decarboxylase">
    <location>
        <begin position="1"/>
        <end position="238"/>
    </location>
</feature>
<feature type="active site" description="Proton donor" evidence="1">
    <location>
        <position position="61"/>
    </location>
</feature>
<feature type="binding site" evidence="1">
    <location>
        <position position="10"/>
    </location>
    <ligand>
        <name>substrate</name>
    </ligand>
</feature>
<feature type="binding site" evidence="1">
    <location>
        <position position="32"/>
    </location>
    <ligand>
        <name>substrate</name>
    </ligand>
</feature>
<feature type="binding site" evidence="1">
    <location>
        <begin position="59"/>
        <end position="68"/>
    </location>
    <ligand>
        <name>substrate</name>
    </ligand>
</feature>
<feature type="binding site" evidence="1">
    <location>
        <position position="122"/>
    </location>
    <ligand>
        <name>substrate</name>
    </ligand>
</feature>
<feature type="binding site" evidence="1">
    <location>
        <position position="184"/>
    </location>
    <ligand>
        <name>substrate</name>
    </ligand>
</feature>
<feature type="binding site" evidence="1">
    <location>
        <position position="193"/>
    </location>
    <ligand>
        <name>substrate</name>
    </ligand>
</feature>
<feature type="binding site" evidence="1">
    <location>
        <position position="213"/>
    </location>
    <ligand>
        <name>substrate</name>
    </ligand>
</feature>
<feature type="binding site" evidence="1">
    <location>
        <position position="214"/>
    </location>
    <ligand>
        <name>substrate</name>
    </ligand>
</feature>
<evidence type="ECO:0000255" key="1">
    <source>
        <dbReference type="HAMAP-Rule" id="MF_01200"/>
    </source>
</evidence>
<proteinExistence type="inferred from homology"/>
<reference key="1">
    <citation type="submission" date="2008-10" db="EMBL/GenBank/DDBJ databases">
        <title>Genome sequence of Bacillus cereus G9842.</title>
        <authorList>
            <person name="Dodson R.J."/>
            <person name="Durkin A.S."/>
            <person name="Rosovitz M.J."/>
            <person name="Rasko D.A."/>
            <person name="Hoffmaster A."/>
            <person name="Ravel J."/>
            <person name="Sutton G."/>
        </authorList>
    </citation>
    <scope>NUCLEOTIDE SEQUENCE [LARGE SCALE GENOMIC DNA]</scope>
    <source>
        <strain>G9842</strain>
    </source>
</reference>
<accession>B7IUP3</accession>
<comment type="function">
    <text evidence="1">Catalyzes the decarboxylation of orotidine 5'-monophosphate (OMP) to uridine 5'-monophosphate (UMP).</text>
</comment>
<comment type="catalytic activity">
    <reaction evidence="1">
        <text>orotidine 5'-phosphate + H(+) = UMP + CO2</text>
        <dbReference type="Rhea" id="RHEA:11596"/>
        <dbReference type="ChEBI" id="CHEBI:15378"/>
        <dbReference type="ChEBI" id="CHEBI:16526"/>
        <dbReference type="ChEBI" id="CHEBI:57538"/>
        <dbReference type="ChEBI" id="CHEBI:57865"/>
        <dbReference type="EC" id="4.1.1.23"/>
    </reaction>
</comment>
<comment type="pathway">
    <text evidence="1">Pyrimidine metabolism; UMP biosynthesis via de novo pathway; UMP from orotate: step 2/2.</text>
</comment>
<comment type="subunit">
    <text evidence="1">Homodimer.</text>
</comment>
<comment type="similarity">
    <text evidence="1">Belongs to the OMP decarboxylase family. Type 1 subfamily.</text>
</comment>
<protein>
    <recommendedName>
        <fullName evidence="1">Orotidine 5'-phosphate decarboxylase</fullName>
        <ecNumber evidence="1">4.1.1.23</ecNumber>
    </recommendedName>
    <alternativeName>
        <fullName evidence="1">OMP decarboxylase</fullName>
        <shortName evidence="1">OMPDCase</shortName>
        <shortName evidence="1">OMPdecase</shortName>
    </alternativeName>
</protein>
<name>PYRF_BACC2</name>
<sequence length="238" mass="26179">MSQSLIVALDFPGKQEVEQFLHHFEGEELFVKVGMELFYKEGPAIITYLKEKGHKIFLDLKLHDIPNTVKSAMRSLASLDVDMVNVHAAGGSSMMKAAIEGLEEGKQEGKERPICIAVTQLTSTSEAMMKKEIGIEKTLEEAVAHYAKLTKDSGLDGVVCSTLEVPKLREVCGNEFVTVTPGIRLASDDVNDQVRVATPKRARELGSSYIVVGRSITKAENPLEAYKTVKQQWEGVTV</sequence>
<dbReference type="EC" id="4.1.1.23" evidence="1"/>
<dbReference type="EMBL" id="CP001186">
    <property type="protein sequence ID" value="ACK97761.1"/>
    <property type="molecule type" value="Genomic_DNA"/>
</dbReference>
<dbReference type="RefSeq" id="WP_000083509.1">
    <property type="nucleotide sequence ID" value="NC_011772.1"/>
</dbReference>
<dbReference type="SMR" id="B7IUP3"/>
<dbReference type="KEGG" id="bcg:BCG9842_B1260"/>
<dbReference type="HOGENOM" id="CLU_067069_1_1_9"/>
<dbReference type="UniPathway" id="UPA00070">
    <property type="reaction ID" value="UER00120"/>
</dbReference>
<dbReference type="Proteomes" id="UP000006744">
    <property type="component" value="Chromosome"/>
</dbReference>
<dbReference type="GO" id="GO:0005829">
    <property type="term" value="C:cytosol"/>
    <property type="evidence" value="ECO:0007669"/>
    <property type="project" value="TreeGrafter"/>
</dbReference>
<dbReference type="GO" id="GO:0004590">
    <property type="term" value="F:orotidine-5'-phosphate decarboxylase activity"/>
    <property type="evidence" value="ECO:0007669"/>
    <property type="project" value="UniProtKB-UniRule"/>
</dbReference>
<dbReference type="GO" id="GO:0006207">
    <property type="term" value="P:'de novo' pyrimidine nucleobase biosynthetic process"/>
    <property type="evidence" value="ECO:0007669"/>
    <property type="project" value="InterPro"/>
</dbReference>
<dbReference type="GO" id="GO:0044205">
    <property type="term" value="P:'de novo' UMP biosynthetic process"/>
    <property type="evidence" value="ECO:0007669"/>
    <property type="project" value="UniProtKB-UniRule"/>
</dbReference>
<dbReference type="CDD" id="cd04725">
    <property type="entry name" value="OMP_decarboxylase_like"/>
    <property type="match status" value="1"/>
</dbReference>
<dbReference type="FunFam" id="3.20.20.70:FF:000015">
    <property type="entry name" value="Orotidine 5'-phosphate decarboxylase"/>
    <property type="match status" value="1"/>
</dbReference>
<dbReference type="Gene3D" id="3.20.20.70">
    <property type="entry name" value="Aldolase class I"/>
    <property type="match status" value="1"/>
</dbReference>
<dbReference type="HAMAP" id="MF_01200_B">
    <property type="entry name" value="OMPdecase_type1_B"/>
    <property type="match status" value="1"/>
</dbReference>
<dbReference type="InterPro" id="IPR013785">
    <property type="entry name" value="Aldolase_TIM"/>
</dbReference>
<dbReference type="InterPro" id="IPR014732">
    <property type="entry name" value="OMPdecase"/>
</dbReference>
<dbReference type="InterPro" id="IPR018089">
    <property type="entry name" value="OMPdecase_AS"/>
</dbReference>
<dbReference type="InterPro" id="IPR047596">
    <property type="entry name" value="OMPdecase_bac"/>
</dbReference>
<dbReference type="InterPro" id="IPR001754">
    <property type="entry name" value="OMPdeCOase_dom"/>
</dbReference>
<dbReference type="InterPro" id="IPR011060">
    <property type="entry name" value="RibuloseP-bd_barrel"/>
</dbReference>
<dbReference type="NCBIfam" id="NF001273">
    <property type="entry name" value="PRK00230.1"/>
    <property type="match status" value="1"/>
</dbReference>
<dbReference type="NCBIfam" id="TIGR01740">
    <property type="entry name" value="pyrF"/>
    <property type="match status" value="1"/>
</dbReference>
<dbReference type="PANTHER" id="PTHR32119">
    <property type="entry name" value="OROTIDINE 5'-PHOSPHATE DECARBOXYLASE"/>
    <property type="match status" value="1"/>
</dbReference>
<dbReference type="PANTHER" id="PTHR32119:SF2">
    <property type="entry name" value="OROTIDINE 5'-PHOSPHATE DECARBOXYLASE"/>
    <property type="match status" value="1"/>
</dbReference>
<dbReference type="Pfam" id="PF00215">
    <property type="entry name" value="OMPdecase"/>
    <property type="match status" value="1"/>
</dbReference>
<dbReference type="SMART" id="SM00934">
    <property type="entry name" value="OMPdecase"/>
    <property type="match status" value="1"/>
</dbReference>
<dbReference type="SUPFAM" id="SSF51366">
    <property type="entry name" value="Ribulose-phoshate binding barrel"/>
    <property type="match status" value="1"/>
</dbReference>
<dbReference type="PROSITE" id="PS00156">
    <property type="entry name" value="OMPDECASE"/>
    <property type="match status" value="1"/>
</dbReference>
<gene>
    <name evidence="1" type="primary">pyrF</name>
    <name type="ordered locus">BCG9842_B1260</name>
</gene>